<comment type="function">
    <text evidence="1">Reversibly transfers an adenylyl group from ATP to 4'-phosphopantetheine, yielding dephospho-CoA (dPCoA) and pyrophosphate.</text>
</comment>
<comment type="catalytic activity">
    <reaction evidence="1">
        <text>(R)-4'-phosphopantetheine + ATP + H(+) = 3'-dephospho-CoA + diphosphate</text>
        <dbReference type="Rhea" id="RHEA:19801"/>
        <dbReference type="ChEBI" id="CHEBI:15378"/>
        <dbReference type="ChEBI" id="CHEBI:30616"/>
        <dbReference type="ChEBI" id="CHEBI:33019"/>
        <dbReference type="ChEBI" id="CHEBI:57328"/>
        <dbReference type="ChEBI" id="CHEBI:61723"/>
        <dbReference type="EC" id="2.7.7.3"/>
    </reaction>
</comment>
<comment type="cofactor">
    <cofactor evidence="1">
        <name>Mg(2+)</name>
        <dbReference type="ChEBI" id="CHEBI:18420"/>
    </cofactor>
</comment>
<comment type="pathway">
    <text evidence="1">Cofactor biosynthesis; coenzyme A biosynthesis; CoA from (R)-pantothenate: step 4/5.</text>
</comment>
<comment type="subunit">
    <text evidence="1">Homohexamer.</text>
</comment>
<comment type="subcellular location">
    <subcellularLocation>
        <location evidence="1">Cytoplasm</location>
    </subcellularLocation>
</comment>
<comment type="similarity">
    <text evidence="1">Belongs to the bacterial CoaD family.</text>
</comment>
<name>COAD_RALN1</name>
<gene>
    <name evidence="1" type="primary">coaD</name>
    <name type="synonym">kdtB</name>
    <name type="ordered locus">RSc0390</name>
    <name type="ORF">RS03358</name>
</gene>
<feature type="chain" id="PRO_0000156261" description="Phosphopantetheine adenylyltransferase">
    <location>
        <begin position="1"/>
        <end position="168"/>
    </location>
</feature>
<feature type="binding site" evidence="1">
    <location>
        <begin position="9"/>
        <end position="10"/>
    </location>
    <ligand>
        <name>ATP</name>
        <dbReference type="ChEBI" id="CHEBI:30616"/>
    </ligand>
</feature>
<feature type="binding site" evidence="1">
    <location>
        <position position="9"/>
    </location>
    <ligand>
        <name>substrate</name>
    </ligand>
</feature>
<feature type="binding site" evidence="1">
    <location>
        <position position="17"/>
    </location>
    <ligand>
        <name>ATP</name>
        <dbReference type="ChEBI" id="CHEBI:30616"/>
    </ligand>
</feature>
<feature type="binding site" evidence="1">
    <location>
        <position position="41"/>
    </location>
    <ligand>
        <name>substrate</name>
    </ligand>
</feature>
<feature type="binding site" evidence="1">
    <location>
        <position position="73"/>
    </location>
    <ligand>
        <name>substrate</name>
    </ligand>
</feature>
<feature type="binding site" evidence="1">
    <location>
        <position position="87"/>
    </location>
    <ligand>
        <name>substrate</name>
    </ligand>
</feature>
<feature type="binding site" evidence="1">
    <location>
        <begin position="88"/>
        <end position="90"/>
    </location>
    <ligand>
        <name>ATP</name>
        <dbReference type="ChEBI" id="CHEBI:30616"/>
    </ligand>
</feature>
<feature type="binding site" evidence="1">
    <location>
        <position position="98"/>
    </location>
    <ligand>
        <name>ATP</name>
        <dbReference type="ChEBI" id="CHEBI:30616"/>
    </ligand>
</feature>
<feature type="binding site" evidence="1">
    <location>
        <begin position="123"/>
        <end position="129"/>
    </location>
    <ligand>
        <name>ATP</name>
        <dbReference type="ChEBI" id="CHEBI:30616"/>
    </ligand>
</feature>
<feature type="site" description="Transition state stabilizer" evidence="1">
    <location>
        <position position="17"/>
    </location>
</feature>
<protein>
    <recommendedName>
        <fullName evidence="1">Phosphopantetheine adenylyltransferase</fullName>
        <ecNumber evidence="1">2.7.7.3</ecNumber>
    </recommendedName>
    <alternativeName>
        <fullName evidence="1">Dephospho-CoA pyrophosphorylase</fullName>
    </alternativeName>
    <alternativeName>
        <fullName evidence="1">Pantetheine-phosphate adenylyltransferase</fullName>
        <shortName evidence="1">PPAT</shortName>
    </alternativeName>
</protein>
<organism>
    <name type="scientific">Ralstonia nicotianae (strain ATCC BAA-1114 / GMI1000)</name>
    <name type="common">Ralstonia solanacearum</name>
    <dbReference type="NCBI Taxonomy" id="267608"/>
    <lineage>
        <taxon>Bacteria</taxon>
        <taxon>Pseudomonadati</taxon>
        <taxon>Pseudomonadota</taxon>
        <taxon>Betaproteobacteria</taxon>
        <taxon>Burkholderiales</taxon>
        <taxon>Burkholderiaceae</taxon>
        <taxon>Ralstonia</taxon>
        <taxon>Ralstonia solanacearum species complex</taxon>
    </lineage>
</organism>
<reference key="1">
    <citation type="journal article" date="2002" name="Nature">
        <title>Genome sequence of the plant pathogen Ralstonia solanacearum.</title>
        <authorList>
            <person name="Salanoubat M."/>
            <person name="Genin S."/>
            <person name="Artiguenave F."/>
            <person name="Gouzy J."/>
            <person name="Mangenot S."/>
            <person name="Arlat M."/>
            <person name="Billault A."/>
            <person name="Brottier P."/>
            <person name="Camus J.-C."/>
            <person name="Cattolico L."/>
            <person name="Chandler M."/>
            <person name="Choisne N."/>
            <person name="Claudel-Renard C."/>
            <person name="Cunnac S."/>
            <person name="Demange N."/>
            <person name="Gaspin C."/>
            <person name="Lavie M."/>
            <person name="Moisan A."/>
            <person name="Robert C."/>
            <person name="Saurin W."/>
            <person name="Schiex T."/>
            <person name="Siguier P."/>
            <person name="Thebault P."/>
            <person name="Whalen M."/>
            <person name="Wincker P."/>
            <person name="Levy M."/>
            <person name="Weissenbach J."/>
            <person name="Boucher C.A."/>
        </authorList>
    </citation>
    <scope>NUCLEOTIDE SEQUENCE [LARGE SCALE GENOMIC DNA]</scope>
    <source>
        <strain>ATCC BAA-1114 / GMI1000</strain>
    </source>
</reference>
<proteinExistence type="inferred from homology"/>
<evidence type="ECO:0000255" key="1">
    <source>
        <dbReference type="HAMAP-Rule" id="MF_00151"/>
    </source>
</evidence>
<accession>Q8Y2E6</accession>
<dbReference type="EC" id="2.7.7.3" evidence="1"/>
<dbReference type="EMBL" id="AL646052">
    <property type="protein sequence ID" value="CAD13918.1"/>
    <property type="molecule type" value="Genomic_DNA"/>
</dbReference>
<dbReference type="RefSeq" id="WP_003262550.1">
    <property type="nucleotide sequence ID" value="NC_003295.1"/>
</dbReference>
<dbReference type="SMR" id="Q8Y2E6"/>
<dbReference type="STRING" id="267608.RSc0390"/>
<dbReference type="EnsemblBacteria" id="CAD13918">
    <property type="protein sequence ID" value="CAD13918"/>
    <property type="gene ID" value="RSc0390"/>
</dbReference>
<dbReference type="GeneID" id="97322363"/>
<dbReference type="KEGG" id="rso:RSc0390"/>
<dbReference type="eggNOG" id="COG0669">
    <property type="taxonomic scope" value="Bacteria"/>
</dbReference>
<dbReference type="HOGENOM" id="CLU_100149_0_1_4"/>
<dbReference type="UniPathway" id="UPA00241">
    <property type="reaction ID" value="UER00355"/>
</dbReference>
<dbReference type="Proteomes" id="UP000001436">
    <property type="component" value="Chromosome"/>
</dbReference>
<dbReference type="GO" id="GO:0005737">
    <property type="term" value="C:cytoplasm"/>
    <property type="evidence" value="ECO:0007669"/>
    <property type="project" value="UniProtKB-SubCell"/>
</dbReference>
<dbReference type="GO" id="GO:0005524">
    <property type="term" value="F:ATP binding"/>
    <property type="evidence" value="ECO:0007669"/>
    <property type="project" value="UniProtKB-KW"/>
</dbReference>
<dbReference type="GO" id="GO:0004595">
    <property type="term" value="F:pantetheine-phosphate adenylyltransferase activity"/>
    <property type="evidence" value="ECO:0007669"/>
    <property type="project" value="UniProtKB-UniRule"/>
</dbReference>
<dbReference type="GO" id="GO:0015937">
    <property type="term" value="P:coenzyme A biosynthetic process"/>
    <property type="evidence" value="ECO:0007669"/>
    <property type="project" value="UniProtKB-UniRule"/>
</dbReference>
<dbReference type="CDD" id="cd02163">
    <property type="entry name" value="PPAT"/>
    <property type="match status" value="1"/>
</dbReference>
<dbReference type="Gene3D" id="3.40.50.620">
    <property type="entry name" value="HUPs"/>
    <property type="match status" value="1"/>
</dbReference>
<dbReference type="HAMAP" id="MF_00151">
    <property type="entry name" value="PPAT_bact"/>
    <property type="match status" value="1"/>
</dbReference>
<dbReference type="InterPro" id="IPR004821">
    <property type="entry name" value="Cyt_trans-like"/>
</dbReference>
<dbReference type="InterPro" id="IPR001980">
    <property type="entry name" value="PPAT"/>
</dbReference>
<dbReference type="InterPro" id="IPR014729">
    <property type="entry name" value="Rossmann-like_a/b/a_fold"/>
</dbReference>
<dbReference type="NCBIfam" id="TIGR01510">
    <property type="entry name" value="coaD_prev_kdtB"/>
    <property type="match status" value="1"/>
</dbReference>
<dbReference type="NCBIfam" id="TIGR00125">
    <property type="entry name" value="cyt_tran_rel"/>
    <property type="match status" value="1"/>
</dbReference>
<dbReference type="PANTHER" id="PTHR21342">
    <property type="entry name" value="PHOSPHOPANTETHEINE ADENYLYLTRANSFERASE"/>
    <property type="match status" value="1"/>
</dbReference>
<dbReference type="PANTHER" id="PTHR21342:SF1">
    <property type="entry name" value="PHOSPHOPANTETHEINE ADENYLYLTRANSFERASE"/>
    <property type="match status" value="1"/>
</dbReference>
<dbReference type="Pfam" id="PF01467">
    <property type="entry name" value="CTP_transf_like"/>
    <property type="match status" value="1"/>
</dbReference>
<dbReference type="PRINTS" id="PR01020">
    <property type="entry name" value="LPSBIOSNTHSS"/>
</dbReference>
<dbReference type="SUPFAM" id="SSF52374">
    <property type="entry name" value="Nucleotidylyl transferase"/>
    <property type="match status" value="1"/>
</dbReference>
<keyword id="KW-0067">ATP-binding</keyword>
<keyword id="KW-0173">Coenzyme A biosynthesis</keyword>
<keyword id="KW-0963">Cytoplasm</keyword>
<keyword id="KW-0460">Magnesium</keyword>
<keyword id="KW-0547">Nucleotide-binding</keyword>
<keyword id="KW-0548">Nucleotidyltransferase</keyword>
<keyword id="KW-1185">Reference proteome</keyword>
<keyword id="KW-0808">Transferase</keyword>
<sequence length="168" mass="19228">MVIAVYPGTFDPFTRGHEDLVRRASNIFDELVVGVAQSPNKRPFFALEERIHIAREVLGHYPNVRVEGFSGLLKDFVRKNNARVIVRGLRAVSDFEYEFQMAGMNRYLLPDVETMFLTPSDQYQFISGTFVREIAQLGGDVSKFVFPSVERWLVEKVGRRHAESDKTA</sequence>